<dbReference type="EC" id="1.5.1.5" evidence="1"/>
<dbReference type="EC" id="3.5.4.9" evidence="1"/>
<dbReference type="EMBL" id="CP000661">
    <property type="protein sequence ID" value="ABP69477.1"/>
    <property type="molecule type" value="Genomic_DNA"/>
</dbReference>
<dbReference type="SMR" id="A4WQ13"/>
<dbReference type="STRING" id="349102.Rsph17025_0571"/>
<dbReference type="KEGG" id="rsq:Rsph17025_0571"/>
<dbReference type="eggNOG" id="COG0190">
    <property type="taxonomic scope" value="Bacteria"/>
</dbReference>
<dbReference type="HOGENOM" id="CLU_034045_2_1_5"/>
<dbReference type="BioCyc" id="RSPH349102:G1G8M-588-MONOMER"/>
<dbReference type="UniPathway" id="UPA00193"/>
<dbReference type="GO" id="GO:0005829">
    <property type="term" value="C:cytosol"/>
    <property type="evidence" value="ECO:0007669"/>
    <property type="project" value="TreeGrafter"/>
</dbReference>
<dbReference type="GO" id="GO:0004477">
    <property type="term" value="F:methenyltetrahydrofolate cyclohydrolase activity"/>
    <property type="evidence" value="ECO:0007669"/>
    <property type="project" value="UniProtKB-UniRule"/>
</dbReference>
<dbReference type="GO" id="GO:0004488">
    <property type="term" value="F:methylenetetrahydrofolate dehydrogenase (NADP+) activity"/>
    <property type="evidence" value="ECO:0007669"/>
    <property type="project" value="UniProtKB-UniRule"/>
</dbReference>
<dbReference type="GO" id="GO:0000105">
    <property type="term" value="P:L-histidine biosynthetic process"/>
    <property type="evidence" value="ECO:0007669"/>
    <property type="project" value="UniProtKB-KW"/>
</dbReference>
<dbReference type="GO" id="GO:0009086">
    <property type="term" value="P:methionine biosynthetic process"/>
    <property type="evidence" value="ECO:0007669"/>
    <property type="project" value="UniProtKB-KW"/>
</dbReference>
<dbReference type="GO" id="GO:0006164">
    <property type="term" value="P:purine nucleotide biosynthetic process"/>
    <property type="evidence" value="ECO:0007669"/>
    <property type="project" value="UniProtKB-KW"/>
</dbReference>
<dbReference type="GO" id="GO:0035999">
    <property type="term" value="P:tetrahydrofolate interconversion"/>
    <property type="evidence" value="ECO:0007669"/>
    <property type="project" value="UniProtKB-UniRule"/>
</dbReference>
<dbReference type="CDD" id="cd01080">
    <property type="entry name" value="NAD_bind_m-THF_DH_Cyclohyd"/>
    <property type="match status" value="1"/>
</dbReference>
<dbReference type="FunFam" id="3.40.50.720:FF:000006">
    <property type="entry name" value="Bifunctional protein FolD"/>
    <property type="match status" value="1"/>
</dbReference>
<dbReference type="FunFam" id="3.40.50.10860:FF:000005">
    <property type="entry name" value="C-1-tetrahydrofolate synthase, cytoplasmic, putative"/>
    <property type="match status" value="1"/>
</dbReference>
<dbReference type="Gene3D" id="3.40.50.10860">
    <property type="entry name" value="Leucine Dehydrogenase, chain A, domain 1"/>
    <property type="match status" value="1"/>
</dbReference>
<dbReference type="Gene3D" id="3.40.50.720">
    <property type="entry name" value="NAD(P)-binding Rossmann-like Domain"/>
    <property type="match status" value="1"/>
</dbReference>
<dbReference type="HAMAP" id="MF_01576">
    <property type="entry name" value="THF_DHG_CYH"/>
    <property type="match status" value="1"/>
</dbReference>
<dbReference type="InterPro" id="IPR046346">
    <property type="entry name" value="Aminoacid_DH-like_N_sf"/>
</dbReference>
<dbReference type="InterPro" id="IPR036291">
    <property type="entry name" value="NAD(P)-bd_dom_sf"/>
</dbReference>
<dbReference type="InterPro" id="IPR000672">
    <property type="entry name" value="THF_DH/CycHdrlase"/>
</dbReference>
<dbReference type="InterPro" id="IPR020630">
    <property type="entry name" value="THF_DH/CycHdrlase_cat_dom"/>
</dbReference>
<dbReference type="InterPro" id="IPR020867">
    <property type="entry name" value="THF_DH/CycHdrlase_CS"/>
</dbReference>
<dbReference type="InterPro" id="IPR020631">
    <property type="entry name" value="THF_DH/CycHdrlase_NAD-bd_dom"/>
</dbReference>
<dbReference type="NCBIfam" id="NF008058">
    <property type="entry name" value="PRK10792.1"/>
    <property type="match status" value="1"/>
</dbReference>
<dbReference type="NCBIfam" id="NF010783">
    <property type="entry name" value="PRK14186.1"/>
    <property type="match status" value="1"/>
</dbReference>
<dbReference type="NCBIfam" id="NF010785">
    <property type="entry name" value="PRK14188.1"/>
    <property type="match status" value="1"/>
</dbReference>
<dbReference type="PANTHER" id="PTHR48099:SF5">
    <property type="entry name" value="C-1-TETRAHYDROFOLATE SYNTHASE, CYTOPLASMIC"/>
    <property type="match status" value="1"/>
</dbReference>
<dbReference type="PANTHER" id="PTHR48099">
    <property type="entry name" value="C-1-TETRAHYDROFOLATE SYNTHASE, CYTOPLASMIC-RELATED"/>
    <property type="match status" value="1"/>
</dbReference>
<dbReference type="Pfam" id="PF00763">
    <property type="entry name" value="THF_DHG_CYH"/>
    <property type="match status" value="1"/>
</dbReference>
<dbReference type="Pfam" id="PF02882">
    <property type="entry name" value="THF_DHG_CYH_C"/>
    <property type="match status" value="1"/>
</dbReference>
<dbReference type="PRINTS" id="PR00085">
    <property type="entry name" value="THFDHDRGNASE"/>
</dbReference>
<dbReference type="SUPFAM" id="SSF53223">
    <property type="entry name" value="Aminoacid dehydrogenase-like, N-terminal domain"/>
    <property type="match status" value="1"/>
</dbReference>
<dbReference type="SUPFAM" id="SSF51735">
    <property type="entry name" value="NAD(P)-binding Rossmann-fold domains"/>
    <property type="match status" value="1"/>
</dbReference>
<dbReference type="PROSITE" id="PS00766">
    <property type="entry name" value="THF_DHG_CYH_1"/>
    <property type="match status" value="1"/>
</dbReference>
<dbReference type="PROSITE" id="PS00767">
    <property type="entry name" value="THF_DHG_CYH_2"/>
    <property type="match status" value="1"/>
</dbReference>
<organism>
    <name type="scientific">Cereibacter sphaeroides (strain ATCC 17025 / ATH 2.4.3)</name>
    <name type="common">Rhodobacter sphaeroides</name>
    <dbReference type="NCBI Taxonomy" id="349102"/>
    <lineage>
        <taxon>Bacteria</taxon>
        <taxon>Pseudomonadati</taxon>
        <taxon>Pseudomonadota</taxon>
        <taxon>Alphaproteobacteria</taxon>
        <taxon>Rhodobacterales</taxon>
        <taxon>Paracoccaceae</taxon>
        <taxon>Cereibacter</taxon>
    </lineage>
</organism>
<evidence type="ECO:0000255" key="1">
    <source>
        <dbReference type="HAMAP-Rule" id="MF_01576"/>
    </source>
</evidence>
<proteinExistence type="inferred from homology"/>
<sequence>MTAKRIDGKAFAAGVRAQVADHVARLKADHGLVPGLAVVLVGEDPASQVYVGAKGKQTVEVGMASFEHRLSAETSEAELLALIDRLNRDPLVHGILVQLPLPPHLNSDLVINALDPAKDVDGFHISNVGRLGTGQKSMVPCTPLGCLMMLRDHLGNLSGLNAVVVGRSNIVGKPMAQLLLGESCTVTIAHSRTKDLAAVCRGADILVAAVGRPEMITGEFIKPGATVIDVGINRIERDGKTKLVGDVDFASAAEVAGAITPVPGGVGPMTIACLLANTLTACCRANGLPEPQGLTA</sequence>
<comment type="function">
    <text evidence="1">Catalyzes the oxidation of 5,10-methylenetetrahydrofolate to 5,10-methenyltetrahydrofolate and then the hydrolysis of 5,10-methenyltetrahydrofolate to 10-formyltetrahydrofolate.</text>
</comment>
<comment type="catalytic activity">
    <reaction evidence="1">
        <text>(6R)-5,10-methylene-5,6,7,8-tetrahydrofolate + NADP(+) = (6R)-5,10-methenyltetrahydrofolate + NADPH</text>
        <dbReference type="Rhea" id="RHEA:22812"/>
        <dbReference type="ChEBI" id="CHEBI:15636"/>
        <dbReference type="ChEBI" id="CHEBI:57455"/>
        <dbReference type="ChEBI" id="CHEBI:57783"/>
        <dbReference type="ChEBI" id="CHEBI:58349"/>
        <dbReference type="EC" id="1.5.1.5"/>
    </reaction>
</comment>
<comment type="catalytic activity">
    <reaction evidence="1">
        <text>(6R)-5,10-methenyltetrahydrofolate + H2O = (6R)-10-formyltetrahydrofolate + H(+)</text>
        <dbReference type="Rhea" id="RHEA:23700"/>
        <dbReference type="ChEBI" id="CHEBI:15377"/>
        <dbReference type="ChEBI" id="CHEBI:15378"/>
        <dbReference type="ChEBI" id="CHEBI:57455"/>
        <dbReference type="ChEBI" id="CHEBI:195366"/>
        <dbReference type="EC" id="3.5.4.9"/>
    </reaction>
</comment>
<comment type="pathway">
    <text evidence="1">One-carbon metabolism; tetrahydrofolate interconversion.</text>
</comment>
<comment type="subunit">
    <text evidence="1">Homodimer.</text>
</comment>
<comment type="similarity">
    <text evidence="1">Belongs to the tetrahydrofolate dehydrogenase/cyclohydrolase family.</text>
</comment>
<feature type="chain" id="PRO_1000069251" description="Bifunctional protein FolD">
    <location>
        <begin position="1"/>
        <end position="296"/>
    </location>
</feature>
<feature type="binding site" evidence="1">
    <location>
        <begin position="166"/>
        <end position="168"/>
    </location>
    <ligand>
        <name>NADP(+)</name>
        <dbReference type="ChEBI" id="CHEBI:58349"/>
    </ligand>
</feature>
<feature type="binding site" evidence="1">
    <location>
        <position position="191"/>
    </location>
    <ligand>
        <name>NADP(+)</name>
        <dbReference type="ChEBI" id="CHEBI:58349"/>
    </ligand>
</feature>
<feature type="binding site" evidence="1">
    <location>
        <position position="232"/>
    </location>
    <ligand>
        <name>NADP(+)</name>
        <dbReference type="ChEBI" id="CHEBI:58349"/>
    </ligand>
</feature>
<protein>
    <recommendedName>
        <fullName evidence="1">Bifunctional protein FolD</fullName>
    </recommendedName>
    <domain>
        <recommendedName>
            <fullName evidence="1">Methylenetetrahydrofolate dehydrogenase</fullName>
            <ecNumber evidence="1">1.5.1.5</ecNumber>
        </recommendedName>
    </domain>
    <domain>
        <recommendedName>
            <fullName evidence="1">Methenyltetrahydrofolate cyclohydrolase</fullName>
            <ecNumber evidence="1">3.5.4.9</ecNumber>
        </recommendedName>
    </domain>
</protein>
<name>FOLD_CERS5</name>
<gene>
    <name evidence="1" type="primary">folD</name>
    <name type="ordered locus">Rsph17025_0571</name>
</gene>
<accession>A4WQ13</accession>
<keyword id="KW-0028">Amino-acid biosynthesis</keyword>
<keyword id="KW-0368">Histidine biosynthesis</keyword>
<keyword id="KW-0378">Hydrolase</keyword>
<keyword id="KW-0486">Methionine biosynthesis</keyword>
<keyword id="KW-0511">Multifunctional enzyme</keyword>
<keyword id="KW-0521">NADP</keyword>
<keyword id="KW-0554">One-carbon metabolism</keyword>
<keyword id="KW-0560">Oxidoreductase</keyword>
<keyword id="KW-0658">Purine biosynthesis</keyword>
<reference key="1">
    <citation type="submission" date="2007-04" db="EMBL/GenBank/DDBJ databases">
        <title>Complete sequence of chromosome of Rhodobacter sphaeroides ATCC 17025.</title>
        <authorList>
            <consortium name="US DOE Joint Genome Institute"/>
            <person name="Copeland A."/>
            <person name="Lucas S."/>
            <person name="Lapidus A."/>
            <person name="Barry K."/>
            <person name="Detter J.C."/>
            <person name="Glavina del Rio T."/>
            <person name="Hammon N."/>
            <person name="Israni S."/>
            <person name="Dalin E."/>
            <person name="Tice H."/>
            <person name="Pitluck S."/>
            <person name="Chertkov O."/>
            <person name="Brettin T."/>
            <person name="Bruce D."/>
            <person name="Han C."/>
            <person name="Schmutz J."/>
            <person name="Larimer F."/>
            <person name="Land M."/>
            <person name="Hauser L."/>
            <person name="Kyrpides N."/>
            <person name="Kim E."/>
            <person name="Richardson P."/>
            <person name="Mackenzie C."/>
            <person name="Choudhary M."/>
            <person name="Donohue T.J."/>
            <person name="Kaplan S."/>
        </authorList>
    </citation>
    <scope>NUCLEOTIDE SEQUENCE [LARGE SCALE GENOMIC DNA]</scope>
    <source>
        <strain>ATCC 17025 / ATH 2.4.3</strain>
    </source>
</reference>